<proteinExistence type="evidence at transcript level"/>
<organism>
    <name type="scientific">Osmerus mordax</name>
    <name type="common">Rainbow smelt</name>
    <name type="synonym">Atherina mordax</name>
    <dbReference type="NCBI Taxonomy" id="8014"/>
    <lineage>
        <taxon>Eukaryota</taxon>
        <taxon>Metazoa</taxon>
        <taxon>Chordata</taxon>
        <taxon>Craniata</taxon>
        <taxon>Vertebrata</taxon>
        <taxon>Euteleostomi</taxon>
        <taxon>Actinopterygii</taxon>
        <taxon>Neopterygii</taxon>
        <taxon>Teleostei</taxon>
        <taxon>Stomiati</taxon>
        <taxon>Osmeriformes</taxon>
        <taxon>Osmeridae</taxon>
        <taxon>Osmerus</taxon>
    </lineage>
</organism>
<gene>
    <name type="primary">fen1</name>
</gene>
<protein>
    <recommendedName>
        <fullName evidence="1">Flap endonuclease 1</fullName>
        <shortName evidence="1">FEN-1</shortName>
        <ecNumber evidence="1">3.1.-.-</ecNumber>
    </recommendedName>
    <alternativeName>
        <fullName evidence="1">Flap structure-specific endonuclease 1</fullName>
    </alternativeName>
</protein>
<comment type="function">
    <text evidence="1">Structure-specific nuclease with 5'-flap endonuclease and 5'-3' exonuclease activities involved in DNA replication and repair. During DNA replication, cleaves the 5'-overhanging flap structure that is generated by displacement synthesis when DNA polymerase encounters the 5'-end of a downstream Okazaki fragment. It enters the flap from the 5'-end and then tracks to cleave the flap base, leaving a nick for ligation. Also involved in the long patch base excision repair (LP-BER) pathway, by cleaving within the apurinic/apyrimidinic (AP) site-terminated flap. Acts as a genome stabilization factor that prevents flaps from equilibrating into structures that lead to duplications and deletions. Also possesses 5'-3' exonuclease activity on nicked or gapped double-stranded DNA, and exhibits RNase H activity. Also involved in replication and repair of rDNA and in repairing mitochondrial DNA.</text>
</comment>
<comment type="cofactor">
    <cofactor evidence="1">
        <name>Mg(2+)</name>
        <dbReference type="ChEBI" id="CHEBI:18420"/>
    </cofactor>
    <text evidence="1">Binds 2 magnesium ions per subunit. They probably participate in the reaction catalyzed by the enzyme. May bind an additional third magnesium ion after substrate binding.</text>
</comment>
<comment type="subunit">
    <text evidence="1">Interacts with PCNA. Three molecules of fen1 bind to one PCNA trimer with each molecule binding to one PCNA monomer. PCNA stimulates the nuclease activity without altering cleavage specificity.</text>
</comment>
<comment type="subcellular location">
    <subcellularLocation>
        <location evidence="1">Nucleus</location>
        <location evidence="1">Nucleolus</location>
    </subcellularLocation>
    <subcellularLocation>
        <location evidence="1">Nucleus</location>
        <location evidence="1">Nucleoplasm</location>
    </subcellularLocation>
    <subcellularLocation>
        <location evidence="1">Mitochondrion</location>
    </subcellularLocation>
    <text evidence="1">Resides mostly in the nucleoli and relocalizes to the nucleoplasm upon DNA damage.</text>
</comment>
<comment type="PTM">
    <text evidence="1">Phosphorylated. Phosphorylation upon DNA damage induces relocalization to the nuclear plasma.</text>
</comment>
<comment type="similarity">
    <text evidence="1">Belongs to the XPG/RAD2 endonuclease family. FEN1 subfamily.</text>
</comment>
<evidence type="ECO:0000255" key="1">
    <source>
        <dbReference type="HAMAP-Rule" id="MF_03140"/>
    </source>
</evidence>
<evidence type="ECO:0000256" key="2">
    <source>
        <dbReference type="SAM" id="MobiDB-lite"/>
    </source>
</evidence>
<accession>C1BM18</accession>
<reference key="1">
    <citation type="submission" date="2009-03" db="EMBL/GenBank/DDBJ databases">
        <title>Osmerus mordax full-length cDNAs.</title>
        <authorList>
            <person name="von Schalburg K."/>
            <person name="Leong J."/>
            <person name="Cooper G.A."/>
            <person name="Davidson W.S."/>
            <person name="Koop B.F."/>
        </authorList>
    </citation>
    <scope>NUCLEOTIDE SEQUENCE [LARGE SCALE MRNA]</scope>
    <source>
        <tissue>Brain</tissue>
    </source>
</reference>
<dbReference type="EC" id="3.1.-.-" evidence="1"/>
<dbReference type="EMBL" id="BT075647">
    <property type="protein sequence ID" value="ACO10071.1"/>
    <property type="molecule type" value="mRNA"/>
</dbReference>
<dbReference type="RefSeq" id="XP_067107431.1">
    <property type="nucleotide sequence ID" value="XM_067251330.1"/>
</dbReference>
<dbReference type="SMR" id="C1BM18"/>
<dbReference type="GeneID" id="136957413"/>
<dbReference type="GO" id="GO:0005739">
    <property type="term" value="C:mitochondrion"/>
    <property type="evidence" value="ECO:0007669"/>
    <property type="project" value="UniProtKB-SubCell"/>
</dbReference>
<dbReference type="GO" id="GO:0005730">
    <property type="term" value="C:nucleolus"/>
    <property type="evidence" value="ECO:0007669"/>
    <property type="project" value="UniProtKB-SubCell"/>
</dbReference>
<dbReference type="GO" id="GO:0005654">
    <property type="term" value="C:nucleoplasm"/>
    <property type="evidence" value="ECO:0007669"/>
    <property type="project" value="UniProtKB-SubCell"/>
</dbReference>
<dbReference type="GO" id="GO:0008409">
    <property type="term" value="F:5'-3' exonuclease activity"/>
    <property type="evidence" value="ECO:0007669"/>
    <property type="project" value="UniProtKB-UniRule"/>
</dbReference>
<dbReference type="GO" id="GO:0017108">
    <property type="term" value="F:5'-flap endonuclease activity"/>
    <property type="evidence" value="ECO:0007669"/>
    <property type="project" value="UniProtKB-UniRule"/>
</dbReference>
<dbReference type="GO" id="GO:0003677">
    <property type="term" value="F:DNA binding"/>
    <property type="evidence" value="ECO:0007669"/>
    <property type="project" value="UniProtKB-UniRule"/>
</dbReference>
<dbReference type="GO" id="GO:0000287">
    <property type="term" value="F:magnesium ion binding"/>
    <property type="evidence" value="ECO:0007669"/>
    <property type="project" value="UniProtKB-UniRule"/>
</dbReference>
<dbReference type="GO" id="GO:0030145">
    <property type="term" value="F:manganese ion binding"/>
    <property type="evidence" value="ECO:0007669"/>
    <property type="project" value="TreeGrafter"/>
</dbReference>
<dbReference type="GO" id="GO:0004523">
    <property type="term" value="F:RNA-DNA hybrid ribonuclease activity"/>
    <property type="evidence" value="ECO:0007669"/>
    <property type="project" value="TreeGrafter"/>
</dbReference>
<dbReference type="GO" id="GO:0006284">
    <property type="term" value="P:base-excision repair"/>
    <property type="evidence" value="ECO:0007669"/>
    <property type="project" value="UniProtKB-UniRule"/>
</dbReference>
<dbReference type="GO" id="GO:0043137">
    <property type="term" value="P:DNA replication, removal of RNA primer"/>
    <property type="evidence" value="ECO:0007669"/>
    <property type="project" value="UniProtKB-UniRule"/>
</dbReference>
<dbReference type="CDD" id="cd09907">
    <property type="entry name" value="H3TH_FEN1-Euk"/>
    <property type="match status" value="1"/>
</dbReference>
<dbReference type="CDD" id="cd09867">
    <property type="entry name" value="PIN_FEN1"/>
    <property type="match status" value="1"/>
</dbReference>
<dbReference type="FunFam" id="1.10.150.20:FF:000009">
    <property type="entry name" value="Flap endonuclease 1"/>
    <property type="match status" value="1"/>
</dbReference>
<dbReference type="FunFam" id="3.40.50.1010:FF:000003">
    <property type="entry name" value="Flap endonuclease 1"/>
    <property type="match status" value="1"/>
</dbReference>
<dbReference type="Gene3D" id="1.10.150.20">
    <property type="entry name" value="5' to 3' exonuclease, C-terminal subdomain"/>
    <property type="match status" value="1"/>
</dbReference>
<dbReference type="Gene3D" id="3.40.50.1010">
    <property type="entry name" value="5'-nuclease"/>
    <property type="match status" value="1"/>
</dbReference>
<dbReference type="HAMAP" id="MF_00614">
    <property type="entry name" value="Fen"/>
    <property type="match status" value="1"/>
</dbReference>
<dbReference type="InterPro" id="IPR036279">
    <property type="entry name" value="5-3_exonuclease_C_sf"/>
</dbReference>
<dbReference type="InterPro" id="IPR023426">
    <property type="entry name" value="Flap_endonuc"/>
</dbReference>
<dbReference type="InterPro" id="IPR008918">
    <property type="entry name" value="HhH2"/>
</dbReference>
<dbReference type="InterPro" id="IPR029060">
    <property type="entry name" value="PIN-like_dom_sf"/>
</dbReference>
<dbReference type="InterPro" id="IPR006086">
    <property type="entry name" value="XPG-I_dom"/>
</dbReference>
<dbReference type="InterPro" id="IPR006084">
    <property type="entry name" value="XPG/Rad2"/>
</dbReference>
<dbReference type="InterPro" id="IPR019974">
    <property type="entry name" value="XPG_CS"/>
</dbReference>
<dbReference type="InterPro" id="IPR006085">
    <property type="entry name" value="XPG_DNA_repair_N"/>
</dbReference>
<dbReference type="PANTHER" id="PTHR11081:SF51">
    <property type="entry name" value="FLAP ENDONUCLEASE 1"/>
    <property type="match status" value="1"/>
</dbReference>
<dbReference type="PANTHER" id="PTHR11081">
    <property type="entry name" value="FLAP ENDONUCLEASE FAMILY MEMBER"/>
    <property type="match status" value="1"/>
</dbReference>
<dbReference type="Pfam" id="PF00867">
    <property type="entry name" value="XPG_I"/>
    <property type="match status" value="1"/>
</dbReference>
<dbReference type="Pfam" id="PF00752">
    <property type="entry name" value="XPG_N"/>
    <property type="match status" value="1"/>
</dbReference>
<dbReference type="PRINTS" id="PR00853">
    <property type="entry name" value="XPGRADSUPER"/>
</dbReference>
<dbReference type="SMART" id="SM00279">
    <property type="entry name" value="HhH2"/>
    <property type="match status" value="1"/>
</dbReference>
<dbReference type="SMART" id="SM00484">
    <property type="entry name" value="XPGI"/>
    <property type="match status" value="1"/>
</dbReference>
<dbReference type="SMART" id="SM00485">
    <property type="entry name" value="XPGN"/>
    <property type="match status" value="1"/>
</dbReference>
<dbReference type="SUPFAM" id="SSF47807">
    <property type="entry name" value="5' to 3' exonuclease, C-terminal subdomain"/>
    <property type="match status" value="1"/>
</dbReference>
<dbReference type="SUPFAM" id="SSF88723">
    <property type="entry name" value="PIN domain-like"/>
    <property type="match status" value="1"/>
</dbReference>
<dbReference type="PROSITE" id="PS00841">
    <property type="entry name" value="XPG_1"/>
    <property type="match status" value="1"/>
</dbReference>
<dbReference type="PROSITE" id="PS00842">
    <property type="entry name" value="XPG_2"/>
    <property type="match status" value="1"/>
</dbReference>
<feature type="chain" id="PRO_0000403490" description="Flap endonuclease 1">
    <location>
        <begin position="1"/>
        <end position="380"/>
    </location>
</feature>
<feature type="region of interest" description="N-domain">
    <location>
        <begin position="1"/>
        <end position="104"/>
    </location>
</feature>
<feature type="region of interest" description="I-domain">
    <location>
        <begin position="122"/>
        <end position="253"/>
    </location>
</feature>
<feature type="region of interest" description="Interaction with PCNA" evidence="1">
    <location>
        <begin position="336"/>
        <end position="344"/>
    </location>
</feature>
<feature type="region of interest" description="Disordered" evidence="2">
    <location>
        <begin position="348"/>
        <end position="380"/>
    </location>
</feature>
<feature type="binding site" evidence="1">
    <location>
        <position position="34"/>
    </location>
    <ligand>
        <name>Mg(2+)</name>
        <dbReference type="ChEBI" id="CHEBI:18420"/>
        <label>1</label>
    </ligand>
</feature>
<feature type="binding site" evidence="1">
    <location>
        <position position="47"/>
    </location>
    <ligand>
        <name>DNA</name>
        <dbReference type="ChEBI" id="CHEBI:16991"/>
    </ligand>
</feature>
<feature type="binding site" evidence="1">
    <location>
        <position position="70"/>
    </location>
    <ligand>
        <name>DNA</name>
        <dbReference type="ChEBI" id="CHEBI:16991"/>
    </ligand>
</feature>
<feature type="binding site" evidence="1">
    <location>
        <position position="86"/>
    </location>
    <ligand>
        <name>Mg(2+)</name>
        <dbReference type="ChEBI" id="CHEBI:18420"/>
        <label>1</label>
    </ligand>
</feature>
<feature type="binding site" evidence="1">
    <location>
        <position position="158"/>
    </location>
    <ligand>
        <name>DNA</name>
        <dbReference type="ChEBI" id="CHEBI:16991"/>
    </ligand>
</feature>
<feature type="binding site" evidence="1">
    <location>
        <position position="158"/>
    </location>
    <ligand>
        <name>Mg(2+)</name>
        <dbReference type="ChEBI" id="CHEBI:18420"/>
        <label>1</label>
    </ligand>
</feature>
<feature type="binding site" evidence="1">
    <location>
        <position position="160"/>
    </location>
    <ligand>
        <name>Mg(2+)</name>
        <dbReference type="ChEBI" id="CHEBI:18420"/>
        <label>1</label>
    </ligand>
</feature>
<feature type="binding site" evidence="1">
    <location>
        <position position="179"/>
    </location>
    <ligand>
        <name>Mg(2+)</name>
        <dbReference type="ChEBI" id="CHEBI:18420"/>
        <label>2</label>
    </ligand>
</feature>
<feature type="binding site" evidence="1">
    <location>
        <position position="181"/>
    </location>
    <ligand>
        <name>Mg(2+)</name>
        <dbReference type="ChEBI" id="CHEBI:18420"/>
        <label>2</label>
    </ligand>
</feature>
<feature type="binding site" evidence="1">
    <location>
        <position position="231"/>
    </location>
    <ligand>
        <name>DNA</name>
        <dbReference type="ChEBI" id="CHEBI:16991"/>
    </ligand>
</feature>
<feature type="binding site" evidence="1">
    <location>
        <position position="233"/>
    </location>
    <ligand>
        <name>DNA</name>
        <dbReference type="ChEBI" id="CHEBI:16991"/>
    </ligand>
</feature>
<feature type="binding site" evidence="1">
    <location>
        <position position="233"/>
    </location>
    <ligand>
        <name>Mg(2+)</name>
        <dbReference type="ChEBI" id="CHEBI:18420"/>
        <label>2</label>
    </ligand>
</feature>
<sequence>MGIHGLAKLIADQAPGAIKEQEMKNFFGRKIAIDASMCIYQFLIAVRQDGNVLQNEDGETTSHLMGMFYRTIRMLENGIKPVYVFDGKPPQLKSGELEKRGERRAEAEKLLAQAQEAGEQENIDKFSKRLVKVTRQHNDECKKLLTLMGVPYVEAPCEAEASCAALVKAGKVFATATEDMDGLTFGTGVLLRHLTASEAKKLPIQEFHFSRILQDIGLSHEQFIDLCILLGCDYCGTIKGIGPKRAMDLIRQHGSIEEILDNIDLSKHPVPEDWLYKEARGLFLTPDVVDCSCLELKWSEPDEEGLVQFMCAEKQFSEDRMRNGCKKILKSRQGSTQGRLDSFFSVTGSLSSKRKEPEMKGSTKKKLKTGATAGKFKKGK</sequence>
<keyword id="KW-0227">DNA damage</keyword>
<keyword id="KW-0234">DNA repair</keyword>
<keyword id="KW-0235">DNA replication</keyword>
<keyword id="KW-0255">Endonuclease</keyword>
<keyword id="KW-0269">Exonuclease</keyword>
<keyword id="KW-0378">Hydrolase</keyword>
<keyword id="KW-0460">Magnesium</keyword>
<keyword id="KW-0479">Metal-binding</keyword>
<keyword id="KW-0496">Mitochondrion</keyword>
<keyword id="KW-0540">Nuclease</keyword>
<keyword id="KW-0539">Nucleus</keyword>
<keyword id="KW-0597">Phosphoprotein</keyword>
<name>FEN1_OSMMO</name>